<reference key="1">
    <citation type="journal article" date="2003" name="Plant Cell">
        <title>Molecular and phylogenetic analyses of the complete MADS-box transcription factor family in Arabidopsis: new openings to the MADS world.</title>
        <authorList>
            <person name="Parenicova L."/>
            <person name="de Folter S."/>
            <person name="Kieffer M."/>
            <person name="Horner D.S."/>
            <person name="Favalli C."/>
            <person name="Busscher J."/>
            <person name="Cook H.E."/>
            <person name="Ingram R.M."/>
            <person name="Kater M.M."/>
            <person name="Davies B."/>
            <person name="Angenent G.C."/>
            <person name="Colombo L."/>
        </authorList>
    </citation>
    <scope>NUCLEOTIDE SEQUENCE [MRNA] (ISOFORM 2)</scope>
    <scope>TISSUE SPECIFICITY</scope>
    <scope>GENE FAMILY</scope>
    <source>
        <strain>cv. Columbia</strain>
        <tissue>Rosette leaf</tissue>
    </source>
</reference>
<reference key="2">
    <citation type="journal article" date="2000" name="Nature">
        <title>Sequence and analysis of chromosome 3 of the plant Arabidopsis thaliana.</title>
        <authorList>
            <person name="Salanoubat M."/>
            <person name="Lemcke K."/>
            <person name="Rieger M."/>
            <person name="Ansorge W."/>
            <person name="Unseld M."/>
            <person name="Fartmann B."/>
            <person name="Valle G."/>
            <person name="Bloecker H."/>
            <person name="Perez-Alonso M."/>
            <person name="Obermaier B."/>
            <person name="Delseny M."/>
            <person name="Boutry M."/>
            <person name="Grivell L.A."/>
            <person name="Mache R."/>
            <person name="Puigdomenech P."/>
            <person name="De Simone V."/>
            <person name="Choisne N."/>
            <person name="Artiguenave F."/>
            <person name="Robert C."/>
            <person name="Brottier P."/>
            <person name="Wincker P."/>
            <person name="Cattolico L."/>
            <person name="Weissenbach J."/>
            <person name="Saurin W."/>
            <person name="Quetier F."/>
            <person name="Schaefer M."/>
            <person name="Mueller-Auer S."/>
            <person name="Gabel C."/>
            <person name="Fuchs M."/>
            <person name="Benes V."/>
            <person name="Wurmbach E."/>
            <person name="Drzonek H."/>
            <person name="Erfle H."/>
            <person name="Jordan N."/>
            <person name="Bangert S."/>
            <person name="Wiedelmann R."/>
            <person name="Kranz H."/>
            <person name="Voss H."/>
            <person name="Holland R."/>
            <person name="Brandt P."/>
            <person name="Nyakatura G."/>
            <person name="Vezzi A."/>
            <person name="D'Angelo M."/>
            <person name="Pallavicini A."/>
            <person name="Toppo S."/>
            <person name="Simionati B."/>
            <person name="Conrad A."/>
            <person name="Hornischer K."/>
            <person name="Kauer G."/>
            <person name="Loehnert T.-H."/>
            <person name="Nordsiek G."/>
            <person name="Reichelt J."/>
            <person name="Scharfe M."/>
            <person name="Schoen O."/>
            <person name="Bargues M."/>
            <person name="Terol J."/>
            <person name="Climent J."/>
            <person name="Navarro P."/>
            <person name="Collado C."/>
            <person name="Perez-Perez A."/>
            <person name="Ottenwaelder B."/>
            <person name="Duchemin D."/>
            <person name="Cooke R."/>
            <person name="Laudie M."/>
            <person name="Berger-Llauro C."/>
            <person name="Purnelle B."/>
            <person name="Masuy D."/>
            <person name="de Haan M."/>
            <person name="Maarse A.C."/>
            <person name="Alcaraz J.-P."/>
            <person name="Cottet A."/>
            <person name="Casacuberta E."/>
            <person name="Monfort A."/>
            <person name="Argiriou A."/>
            <person name="Flores M."/>
            <person name="Liguori R."/>
            <person name="Vitale D."/>
            <person name="Mannhaupt G."/>
            <person name="Haase D."/>
            <person name="Schoof H."/>
            <person name="Rudd S."/>
            <person name="Zaccaria P."/>
            <person name="Mewes H.-W."/>
            <person name="Mayer K.F.X."/>
            <person name="Kaul S."/>
            <person name="Town C.D."/>
            <person name="Koo H.L."/>
            <person name="Tallon L.J."/>
            <person name="Jenkins J."/>
            <person name="Rooney T."/>
            <person name="Rizzo M."/>
            <person name="Walts A."/>
            <person name="Utterback T."/>
            <person name="Fujii C.Y."/>
            <person name="Shea T.P."/>
            <person name="Creasy T.H."/>
            <person name="Haas B."/>
            <person name="Maiti R."/>
            <person name="Wu D."/>
            <person name="Peterson J."/>
            <person name="Van Aken S."/>
            <person name="Pai G."/>
            <person name="Militscher J."/>
            <person name="Sellers P."/>
            <person name="Gill J.E."/>
            <person name="Feldblyum T.V."/>
            <person name="Preuss D."/>
            <person name="Lin X."/>
            <person name="Nierman W.C."/>
            <person name="Salzberg S.L."/>
            <person name="White O."/>
            <person name="Venter J.C."/>
            <person name="Fraser C.M."/>
            <person name="Kaneko T."/>
            <person name="Nakamura Y."/>
            <person name="Sato S."/>
            <person name="Kato T."/>
            <person name="Asamizu E."/>
            <person name="Sasamoto S."/>
            <person name="Kimura T."/>
            <person name="Idesawa K."/>
            <person name="Kawashima K."/>
            <person name="Kishida Y."/>
            <person name="Kiyokawa C."/>
            <person name="Kohara M."/>
            <person name="Matsumoto M."/>
            <person name="Matsuno A."/>
            <person name="Muraki A."/>
            <person name="Nakayama S."/>
            <person name="Nakazaki N."/>
            <person name="Shinpo S."/>
            <person name="Takeuchi C."/>
            <person name="Wada T."/>
            <person name="Watanabe A."/>
            <person name="Yamada M."/>
            <person name="Yasuda M."/>
            <person name="Tabata S."/>
        </authorList>
    </citation>
    <scope>NUCLEOTIDE SEQUENCE [LARGE SCALE GENOMIC DNA]</scope>
    <source>
        <strain>cv. Columbia</strain>
    </source>
</reference>
<reference key="3">
    <citation type="journal article" date="2017" name="Plant J.">
        <title>Araport11: a complete reannotation of the Arabidopsis thaliana reference genome.</title>
        <authorList>
            <person name="Cheng C.Y."/>
            <person name="Krishnakumar V."/>
            <person name="Chan A.P."/>
            <person name="Thibaud-Nissen F."/>
            <person name="Schobel S."/>
            <person name="Town C.D."/>
        </authorList>
    </citation>
    <scope>GENOME REANNOTATION</scope>
    <source>
        <strain>cv. Columbia</strain>
    </source>
</reference>
<reference key="4">
    <citation type="submission" date="2007-01" db="EMBL/GenBank/DDBJ databases">
        <title>Arabidopsis ORF clones.</title>
        <authorList>
            <person name="Bautista V.R."/>
            <person name="Kim C.J."/>
            <person name="Chen H."/>
            <person name="Wu S.Y."/>
            <person name="De Los Reyes C."/>
            <person name="Ecker J.R."/>
        </authorList>
    </citation>
    <scope>NUCLEOTIDE SEQUENCE [LARGE SCALE MRNA] (ISOFORM 1)</scope>
    <source>
        <strain>cv. Columbia</strain>
    </source>
</reference>
<reference key="5">
    <citation type="journal article" date="2000" name="Plant J.">
        <title>MADS-box gene evolution beyond flowers: expression in pollen, endosperm, guard cells, roots and trichomes.</title>
        <authorList>
            <person name="Alvarez-Buylla E.R."/>
            <person name="Liljegren S.J."/>
            <person name="Pelaz S."/>
            <person name="Gold S.E."/>
            <person name="Burgeff C."/>
            <person name="Ditta G.S."/>
            <person name="Vergara-Silva F."/>
            <person name="Yanofsky M.F."/>
        </authorList>
    </citation>
    <scope>NUCLEOTIDE SEQUENCE [MRNA] OF 24-240 (ISOFORM 1)</scope>
    <scope>TISSUE SPECIFICITY</scope>
    <source>
        <strain>cv. Landsberg erecta</strain>
        <tissue>Leaf</tissue>
        <tissue>Root</tissue>
        <tissue>Stem</tissue>
    </source>
</reference>
<reference key="6">
    <citation type="journal article" date="2003" name="Mol. Biol. Evol.">
        <title>Evolution and divergence of the MADS-box gene family based on genome-wide expression analyses.</title>
        <authorList>
            <person name="Kofuji R."/>
            <person name="Sumikawa N."/>
            <person name="Yamasaki M."/>
            <person name="Kondo K."/>
            <person name="Ueda K."/>
            <person name="Ito M."/>
            <person name="Hasebe M."/>
        </authorList>
    </citation>
    <scope>TISSUE SPECIFICITY</scope>
    <scope>GENE FAMILY</scope>
    <source>
        <strain>cv. Columbia</strain>
    </source>
</reference>
<reference key="7">
    <citation type="journal article" date="2005" name="Plant Cell">
        <title>Comprehensive interaction map of the Arabidopsis MADS Box transcription factors.</title>
        <authorList>
            <person name="de Folter S."/>
            <person name="Immink R.G.H."/>
            <person name="Kieffer M."/>
            <person name="Parenicova L."/>
            <person name="Henz S.R."/>
            <person name="Weigel D."/>
            <person name="Busscher M."/>
            <person name="Kooiker M."/>
            <person name="Colombo L."/>
            <person name="Kater M.M."/>
            <person name="Davies B."/>
            <person name="Angenent G.C."/>
        </authorList>
    </citation>
    <scope>INTERACTION WITH AGL15; AGL16; AGL24; AP1; AGL6; AG; AGL1; AGL11; AGL5; SEP3; SEP1; AGL63; AGL14; SOC1 AND AGL21</scope>
</reference>
<reference key="8">
    <citation type="journal article" date="2007" name="Plant Cell">
        <title>MicroRNA-mediated regulation of stomatal development in Arabidopsis.</title>
        <authorList>
            <person name="Kutter C."/>
            <person name="Schoeb H."/>
            <person name="Stadler M."/>
            <person name="Meins F. Jr."/>
            <person name="Si-Ammour A."/>
        </authorList>
    </citation>
    <scope>FUNCTION</scope>
    <scope>TISSUE SPECIFICITY</scope>
</reference>
<reference key="9">
    <citation type="journal article" date="2008" name="Proc. Natl. Acad. Sci. U.S.A.">
        <title>Structurally different alleles of the ath-MIR824 microRNA precursor are maintained at high frequency in Arabidopsis thaliana.</title>
        <authorList>
            <person name="de Meaux J."/>
            <person name="Hu J.-Y."/>
            <person name="Tartler U."/>
            <person name="Goebel U."/>
        </authorList>
    </citation>
    <scope>REPRESSION BY MIR824</scope>
</reference>
<reference key="10">
    <citation type="journal article" date="2010" name="Plant J.">
        <title>GORDITA (AGL63) is a young paralog of the Arabidopsis thaliana B(sister) MADS box gene ABS (TT16) that has undergone neofunctionalization.</title>
        <authorList>
            <person name="Erdmann R."/>
            <person name="Gramzow L."/>
            <person name="Melzer R."/>
            <person name="Theissen G."/>
            <person name="Becker A."/>
        </authorList>
    </citation>
    <scope>INTERACTION WITH AGL63</scope>
    <source>
        <strain>cv. Columbia</strain>
        <tissue>Flower</tissue>
        <tissue>Flower bud</tissue>
    </source>
</reference>
<reference key="11">
    <citation type="journal article" date="2014" name="Plant Cell">
        <title>miR824-regulated AGAMOUS-LIKE16 contributes to flowering time repression in Arabidopsis.</title>
        <authorList>
            <person name="Hu J.Y."/>
            <person name="Zhou Y."/>
            <person name="He F."/>
            <person name="Dong X."/>
            <person name="Liu L.Y."/>
            <person name="Coupland G."/>
            <person name="Turck F."/>
            <person name="de Meaux J."/>
        </authorList>
    </citation>
    <scope>FUNCTION</scope>
    <scope>INTERACTION WITH SVP</scope>
</reference>
<name>AGL16_ARATH</name>
<sequence length="240" mass="27428">MGRGKIAIKRINNSTSRQVTFSKRRNGLLKKAKELAILCDAEVGVIIFSSTGRLYDFSSSSMKSVIERYSDAKGETSSENDPASEIQFWQKEAAILKRQLHNLQENHRQMMGEELSGLSVEALQNLENQLELSLRGVRMKKDQMLIEEIQVLNREGNLVHQENLDLHKKVNLMHQQNMELHEKVSEVEGVKIANKNSLLTNGLDMRDTSNEHVHLQLSQPQHDHETHSKAIQLNYFSFIA</sequence>
<keyword id="KW-0025">Alternative splicing</keyword>
<keyword id="KW-0217">Developmental protein</keyword>
<keyword id="KW-0238">DNA-binding</keyword>
<keyword id="KW-0287">Flowering</keyword>
<keyword id="KW-0539">Nucleus</keyword>
<keyword id="KW-1185">Reference proteome</keyword>
<keyword id="KW-0804">Transcription</keyword>
<keyword id="KW-0805">Transcription regulation</keyword>
<accession>A2RVQ5</accession>
<accession>Q7XYY8</accession>
<accession>Q9FPP0</accession>
<accession>Q9M2M4</accession>
<feature type="chain" id="PRO_0000412530" description="Agamous-like MADS-box protein AGL16">
    <location>
        <begin position="1"/>
        <end position="240"/>
    </location>
</feature>
<feature type="domain" description="MADS-box" evidence="1">
    <location>
        <begin position="1"/>
        <end position="61"/>
    </location>
</feature>
<feature type="domain" description="K-box" evidence="2">
    <location>
        <begin position="86"/>
        <end position="176"/>
    </location>
</feature>
<feature type="splice variant" id="VSP_041688" description="In isoform 2." evidence="11">
    <original>DQMLIEEIQVLNREGNLVHQENLDLHKKVNLMHQQNMELHEKVSEVEGVKIANKNSLLTNGLDMRDTSNEHVHLQLSQPQHDHETHSKAIQLNYFSFIA</original>
    <variation>VLML</variation>
    <location>
        <begin position="142"/>
        <end position="240"/>
    </location>
</feature>
<dbReference type="EMBL" id="AY141209">
    <property type="protein sequence ID" value="AAN52773.1"/>
    <property type="molecule type" value="mRNA"/>
</dbReference>
<dbReference type="EMBL" id="AL137080">
    <property type="protein sequence ID" value="CAB68129.1"/>
    <property type="status" value="ALT_SEQ"/>
    <property type="molecule type" value="Genomic_DNA"/>
</dbReference>
<dbReference type="EMBL" id="CP002686">
    <property type="protein sequence ID" value="AEE79629.1"/>
    <property type="molecule type" value="Genomic_DNA"/>
</dbReference>
<dbReference type="EMBL" id="CP002686">
    <property type="protein sequence ID" value="AEE79630.2"/>
    <property type="molecule type" value="Genomic_DNA"/>
</dbReference>
<dbReference type="EMBL" id="CP002686">
    <property type="protein sequence ID" value="ANM64245.1"/>
    <property type="molecule type" value="Genomic_DNA"/>
</dbReference>
<dbReference type="EMBL" id="BT030046">
    <property type="protein sequence ID" value="ABN04784.1"/>
    <property type="molecule type" value="mRNA"/>
</dbReference>
<dbReference type="EMBL" id="AF312662">
    <property type="protein sequence ID" value="AAG37899.1"/>
    <property type="molecule type" value="mRNA"/>
</dbReference>
<dbReference type="RefSeq" id="NP_001319775.1">
    <molecule id="A2RVQ5-2"/>
    <property type="nucleotide sequence ID" value="NM_001339845.1"/>
</dbReference>
<dbReference type="RefSeq" id="NP_001326287.1">
    <molecule id="A2RVQ5-1"/>
    <property type="nucleotide sequence ID" value="NM_001339847.1"/>
</dbReference>
<dbReference type="RefSeq" id="NP_191282.2">
    <molecule id="A2RVQ5-1"/>
    <property type="nucleotide sequence ID" value="NM_115583.6"/>
</dbReference>
<dbReference type="SMR" id="A2RVQ5"/>
<dbReference type="BioGRID" id="10206">
    <property type="interactions" value="43"/>
</dbReference>
<dbReference type="FunCoup" id="A2RVQ5">
    <property type="interactions" value="45"/>
</dbReference>
<dbReference type="IntAct" id="A2RVQ5">
    <property type="interactions" value="40"/>
</dbReference>
<dbReference type="STRING" id="3702.A2RVQ5"/>
<dbReference type="PaxDb" id="3702-AT3G57230.1"/>
<dbReference type="ProteomicsDB" id="244833">
    <molecule id="A2RVQ5-1"/>
</dbReference>
<dbReference type="EnsemblPlants" id="AT3G57230.1">
    <molecule id="A2RVQ5-1"/>
    <property type="protein sequence ID" value="AT3G57230.1"/>
    <property type="gene ID" value="AT3G57230"/>
</dbReference>
<dbReference type="EnsemblPlants" id="AT3G57230.2">
    <molecule id="A2RVQ5-2"/>
    <property type="protein sequence ID" value="AT3G57230.2"/>
    <property type="gene ID" value="AT3G57230"/>
</dbReference>
<dbReference type="EnsemblPlants" id="AT3G57230.4">
    <molecule id="A2RVQ5-1"/>
    <property type="protein sequence ID" value="AT3G57230.4"/>
    <property type="gene ID" value="AT3G57230"/>
</dbReference>
<dbReference type="GeneID" id="824890"/>
<dbReference type="Gramene" id="AT3G57230.1">
    <molecule id="A2RVQ5-1"/>
    <property type="protein sequence ID" value="AT3G57230.1"/>
    <property type="gene ID" value="AT3G57230"/>
</dbReference>
<dbReference type="Gramene" id="AT3G57230.2">
    <molecule id="A2RVQ5-2"/>
    <property type="protein sequence ID" value="AT3G57230.2"/>
    <property type="gene ID" value="AT3G57230"/>
</dbReference>
<dbReference type="Gramene" id="AT3G57230.4">
    <molecule id="A2RVQ5-1"/>
    <property type="protein sequence ID" value="AT3G57230.4"/>
    <property type="gene ID" value="AT3G57230"/>
</dbReference>
<dbReference type="KEGG" id="ath:AT3G57230"/>
<dbReference type="Araport" id="AT3G57230"/>
<dbReference type="TAIR" id="AT3G57230">
    <property type="gene designation" value="AGL16"/>
</dbReference>
<dbReference type="eggNOG" id="KOG0014">
    <property type="taxonomic scope" value="Eukaryota"/>
</dbReference>
<dbReference type="HOGENOM" id="CLU_053053_2_0_1"/>
<dbReference type="InParanoid" id="A2RVQ5"/>
<dbReference type="OMA" id="KSELKFW"/>
<dbReference type="OrthoDB" id="1898716at2759"/>
<dbReference type="PhylomeDB" id="A2RVQ5"/>
<dbReference type="PRO" id="PR:A2RVQ5"/>
<dbReference type="Proteomes" id="UP000006548">
    <property type="component" value="Chromosome 3"/>
</dbReference>
<dbReference type="ExpressionAtlas" id="A2RVQ5">
    <property type="expression patterns" value="baseline and differential"/>
</dbReference>
<dbReference type="GO" id="GO:0005634">
    <property type="term" value="C:nucleus"/>
    <property type="evidence" value="ECO:0000314"/>
    <property type="project" value="TAIR"/>
</dbReference>
<dbReference type="GO" id="GO:0003700">
    <property type="term" value="F:DNA-binding transcription factor activity"/>
    <property type="evidence" value="ECO:0000250"/>
    <property type="project" value="TAIR"/>
</dbReference>
<dbReference type="GO" id="GO:0042803">
    <property type="term" value="F:protein homodimerization activity"/>
    <property type="evidence" value="ECO:0000314"/>
    <property type="project" value="UniProtKB"/>
</dbReference>
<dbReference type="GO" id="GO:0000977">
    <property type="term" value="F:RNA polymerase II transcription regulatory region sequence-specific DNA binding"/>
    <property type="evidence" value="ECO:0007669"/>
    <property type="project" value="InterPro"/>
</dbReference>
<dbReference type="GO" id="GO:0000976">
    <property type="term" value="F:transcription cis-regulatory region binding"/>
    <property type="evidence" value="ECO:0000353"/>
    <property type="project" value="TAIR"/>
</dbReference>
<dbReference type="GO" id="GO:0009908">
    <property type="term" value="P:flower development"/>
    <property type="evidence" value="ECO:0007669"/>
    <property type="project" value="UniProtKB-KW"/>
</dbReference>
<dbReference type="GO" id="GO:0045944">
    <property type="term" value="P:positive regulation of transcription by RNA polymerase II"/>
    <property type="evidence" value="ECO:0007669"/>
    <property type="project" value="InterPro"/>
</dbReference>
<dbReference type="GO" id="GO:0010440">
    <property type="term" value="P:stomatal lineage progression"/>
    <property type="evidence" value="ECO:0000315"/>
    <property type="project" value="TAIR"/>
</dbReference>
<dbReference type="CDD" id="cd00265">
    <property type="entry name" value="MADS_MEF2_like"/>
    <property type="match status" value="1"/>
</dbReference>
<dbReference type="FunFam" id="3.40.1810.10:FF:000003">
    <property type="entry name" value="MADS-box transcription factor MADS-MC"/>
    <property type="match status" value="1"/>
</dbReference>
<dbReference type="Gene3D" id="3.40.1810.10">
    <property type="entry name" value="Transcription factor, MADS-box"/>
    <property type="match status" value="1"/>
</dbReference>
<dbReference type="InterPro" id="IPR050142">
    <property type="entry name" value="MADS-box/MEF2_TF"/>
</dbReference>
<dbReference type="InterPro" id="IPR033896">
    <property type="entry name" value="MEF2-like_N"/>
</dbReference>
<dbReference type="InterPro" id="IPR002487">
    <property type="entry name" value="TF_Kbox"/>
</dbReference>
<dbReference type="InterPro" id="IPR002100">
    <property type="entry name" value="TF_MADSbox"/>
</dbReference>
<dbReference type="InterPro" id="IPR036879">
    <property type="entry name" value="TF_MADSbox_sf"/>
</dbReference>
<dbReference type="PANTHER" id="PTHR48019">
    <property type="entry name" value="SERUM RESPONSE FACTOR HOMOLOG"/>
    <property type="match status" value="1"/>
</dbReference>
<dbReference type="Pfam" id="PF01486">
    <property type="entry name" value="K-box"/>
    <property type="match status" value="1"/>
</dbReference>
<dbReference type="Pfam" id="PF00319">
    <property type="entry name" value="SRF-TF"/>
    <property type="match status" value="1"/>
</dbReference>
<dbReference type="PRINTS" id="PR00404">
    <property type="entry name" value="MADSDOMAIN"/>
</dbReference>
<dbReference type="SMART" id="SM00432">
    <property type="entry name" value="MADS"/>
    <property type="match status" value="1"/>
</dbReference>
<dbReference type="SUPFAM" id="SSF55455">
    <property type="entry name" value="SRF-like"/>
    <property type="match status" value="1"/>
</dbReference>
<dbReference type="PROSITE" id="PS51297">
    <property type="entry name" value="K_BOX"/>
    <property type="match status" value="1"/>
</dbReference>
<dbReference type="PROSITE" id="PS00350">
    <property type="entry name" value="MADS_BOX_1"/>
    <property type="match status" value="1"/>
</dbReference>
<dbReference type="PROSITE" id="PS50066">
    <property type="entry name" value="MADS_BOX_2"/>
    <property type="match status" value="1"/>
</dbReference>
<evidence type="ECO:0000255" key="1">
    <source>
        <dbReference type="PROSITE-ProRule" id="PRU00251"/>
    </source>
</evidence>
<evidence type="ECO:0000255" key="2">
    <source>
        <dbReference type="PROSITE-ProRule" id="PRU00629"/>
    </source>
</evidence>
<evidence type="ECO:0000269" key="3">
    <source>
    </source>
</evidence>
<evidence type="ECO:0000269" key="4">
    <source>
    </source>
</evidence>
<evidence type="ECO:0000269" key="5">
    <source>
    </source>
</evidence>
<evidence type="ECO:0000269" key="6">
    <source>
    </source>
</evidence>
<evidence type="ECO:0000269" key="7">
    <source>
    </source>
</evidence>
<evidence type="ECO:0000269" key="8">
    <source>
    </source>
</evidence>
<evidence type="ECO:0000269" key="9">
    <source>
    </source>
</evidence>
<evidence type="ECO:0000269" key="10">
    <source>
    </source>
</evidence>
<evidence type="ECO:0000303" key="11">
    <source>
    </source>
</evidence>
<evidence type="ECO:0000305" key="12"/>
<organism>
    <name type="scientific">Arabidopsis thaliana</name>
    <name type="common">Mouse-ear cress</name>
    <dbReference type="NCBI Taxonomy" id="3702"/>
    <lineage>
        <taxon>Eukaryota</taxon>
        <taxon>Viridiplantae</taxon>
        <taxon>Streptophyta</taxon>
        <taxon>Embryophyta</taxon>
        <taxon>Tracheophyta</taxon>
        <taxon>Spermatophyta</taxon>
        <taxon>Magnoliopsida</taxon>
        <taxon>eudicotyledons</taxon>
        <taxon>Gunneridae</taxon>
        <taxon>Pentapetalae</taxon>
        <taxon>rosids</taxon>
        <taxon>malvids</taxon>
        <taxon>Brassicales</taxon>
        <taxon>Brassicaceae</taxon>
        <taxon>Camelineae</taxon>
        <taxon>Arabidopsis</taxon>
    </lineage>
</organism>
<comment type="function">
    <text evidence="7 10">Probable transcription factor involved in the regulation of flowering time in long-day photoperiod. Participates in the repression of FT expression and floral transition, by interacting closely with the FLC-SVP pathways (PubMed:24876250). Functions in the satellite meristemoid lineage of stomatal development (PubMed:17704216).</text>
</comment>
<comment type="subunit">
    <text evidence="6 9 10">Homodimer. Interacts with AGL15, AGL24, AP1, AGL6, AG, AGL1, AGL11, AGL5, SEP3, SEP1, AGL63, AGL14, SOC1 and AGL21 (PubMed:15805477). Interacts with AGL63 (PubMed:20598091). Interacts with SVP (PubMed:24876250).</text>
</comment>
<comment type="interaction">
    <interactant intactId="EBI-621930">
        <id>A2RVQ5</id>
    </interactant>
    <interactant intactId="EBI-621986">
        <id>Q9SZJ6</id>
        <label>AGL21</label>
    </interactant>
    <organismsDiffer>false</organismsDiffer>
    <experiments>5</experiments>
</comment>
<comment type="subcellular location">
    <subcellularLocation>
        <location evidence="1">Nucleus</location>
    </subcellularLocation>
</comment>
<comment type="alternative products">
    <event type="alternative splicing"/>
    <isoform>
        <id>A2RVQ5-1</id>
        <name>1</name>
        <sequence type="displayed"/>
    </isoform>
    <isoform>
        <id>A2RVQ5-2</id>
        <name>2</name>
        <name>AGL16-II</name>
        <sequence type="described" ref="VSP_041688"/>
    </isoform>
</comment>
<comment type="tissue specificity">
    <text evidence="3 4 5 7">Expressed at high levels in leaves, moderate levels in roots, seedlings and stems, and at low levels in flowers, pollen and siliques. Accumulates in leaf guard cells and trichomes. Also present in epidermal cells of roots (PubMed:11115127, PubMed:12837945, PubMed:12949148). Expressed in mature guard cells (PubMed:17704216).</text>
</comment>
<comment type="induction">
    <text evidence="8">Repressed by the micro RNA miR824.</text>
</comment>
<comment type="sequence caution" evidence="12">
    <conflict type="erroneous gene model prediction">
        <sequence resource="EMBL-CDS" id="CAB68129"/>
    </conflict>
</comment>
<gene>
    <name type="primary">AGL16</name>
    <name type="ordered locus">At3g57230</name>
    <name type="ORF">F28O9.80</name>
</gene>
<protein>
    <recommendedName>
        <fullName>Agamous-like MADS-box protein AGL16</fullName>
    </recommendedName>
</protein>
<proteinExistence type="evidence at protein level"/>